<protein>
    <recommendedName>
        <fullName>Polyribonucleotide 5'-hydroxyl-kinase PH0197</fullName>
        <ecNumber>2.7.1.78</ecNumber>
    </recommendedName>
    <alternativeName>
        <fullName>Polynucleotide kinase PH0197</fullName>
    </alternativeName>
</protein>
<keyword id="KW-0067">ATP-binding</keyword>
<keyword id="KW-0418">Kinase</keyword>
<keyword id="KW-0547">Nucleotide-binding</keyword>
<keyword id="KW-0808">Transferase</keyword>
<sequence>MLTEVCKMGTNKAFFTNEVPEDRYIAAEKISSLKKPATVMIIGDVDTGKTTLTIYLANELISRGFRVSIIDSDVGQKSILPPATISLAFVDTHFSSLEDLTPFAHYFVGTITPSQFFGEMVIGVMKLAELAKKFSDVVLIDTTGMIYGPGVELKRMKIEAIKPDLILALERENELTPIIKGFEDITLKLRVSDKVKEFSRSERKELRREKWKRYFENSRIVTFNVNDILVTGTSMFQGKPIEEGEKNLLERLFKWLILHGRKLGERYFVVKVDTSEGPRVVDKNVVRYFDFSKLSNLLLGLLDKEGFCQGVGILKAINFSEGRLEVLTPVKDISIITEIRFGRIRVREDGEELGLLDREVL</sequence>
<name>PRNK_PYRHO</name>
<dbReference type="EC" id="2.7.1.78"/>
<dbReference type="EMBL" id="BA000001">
    <property type="protein sequence ID" value="BAA29266.1"/>
    <property type="molecule type" value="Genomic_DNA"/>
</dbReference>
<dbReference type="PIR" id="C71242">
    <property type="entry name" value="C71242"/>
</dbReference>
<dbReference type="SMR" id="O57936"/>
<dbReference type="MINT" id="O57936"/>
<dbReference type="STRING" id="70601.gene:9377107"/>
<dbReference type="EnsemblBacteria" id="BAA29266">
    <property type="protein sequence ID" value="BAA29266"/>
    <property type="gene ID" value="BAA29266"/>
</dbReference>
<dbReference type="KEGG" id="pho:PH0197"/>
<dbReference type="eggNOG" id="arCOG04127">
    <property type="taxonomic scope" value="Archaea"/>
</dbReference>
<dbReference type="Proteomes" id="UP000000752">
    <property type="component" value="Chromosome"/>
</dbReference>
<dbReference type="GO" id="GO:0005524">
    <property type="term" value="F:ATP binding"/>
    <property type="evidence" value="ECO:0007669"/>
    <property type="project" value="UniProtKB-KW"/>
</dbReference>
<dbReference type="GO" id="GO:0016887">
    <property type="term" value="F:ATP hydrolysis activity"/>
    <property type="evidence" value="ECO:0007669"/>
    <property type="project" value="InterPro"/>
</dbReference>
<dbReference type="GO" id="GO:0046404">
    <property type="term" value="F:ATP-dependent polydeoxyribonucleotide 5'-hydroxyl-kinase activity"/>
    <property type="evidence" value="ECO:0007669"/>
    <property type="project" value="RHEA"/>
</dbReference>
<dbReference type="GO" id="GO:0051736">
    <property type="term" value="F:ATP-dependent polyribonucleotide 5'-hydroxyl-kinase activity"/>
    <property type="evidence" value="ECO:0007669"/>
    <property type="project" value="RHEA"/>
</dbReference>
<dbReference type="GO" id="GO:0006396">
    <property type="term" value="P:RNA processing"/>
    <property type="evidence" value="ECO:0007669"/>
    <property type="project" value="InterPro"/>
</dbReference>
<dbReference type="Gene3D" id="3.40.50.300">
    <property type="entry name" value="P-loop containing nucleotide triphosphate hydrolases"/>
    <property type="match status" value="1"/>
</dbReference>
<dbReference type="InterPro" id="IPR003593">
    <property type="entry name" value="AAA+_ATPase"/>
</dbReference>
<dbReference type="InterPro" id="IPR045116">
    <property type="entry name" value="Clp1/Grc3"/>
</dbReference>
<dbReference type="InterPro" id="IPR032319">
    <property type="entry name" value="CLP1_P"/>
</dbReference>
<dbReference type="InterPro" id="IPR027417">
    <property type="entry name" value="P-loop_NTPase"/>
</dbReference>
<dbReference type="PANTHER" id="PTHR12755">
    <property type="entry name" value="CLEAVAGE/POLYADENYLATION FACTOR IA SUBUNIT CLP1P"/>
    <property type="match status" value="1"/>
</dbReference>
<dbReference type="PANTHER" id="PTHR12755:SF3">
    <property type="entry name" value="POLYNUCLEOTIDE 5'-HYDROXYL-KINASE NOL9"/>
    <property type="match status" value="1"/>
</dbReference>
<dbReference type="Pfam" id="PF16575">
    <property type="entry name" value="CLP1_P"/>
    <property type="match status" value="1"/>
</dbReference>
<dbReference type="SMART" id="SM00382">
    <property type="entry name" value="AAA"/>
    <property type="match status" value="1"/>
</dbReference>
<dbReference type="SUPFAM" id="SSF52540">
    <property type="entry name" value="P-loop containing nucleoside triphosphate hydrolases"/>
    <property type="match status" value="1"/>
</dbReference>
<accession>O57936</accession>
<proteinExistence type="evidence at protein level"/>
<comment type="function">
    <text evidence="1">Polynucleotide kinase that can phosphorylate the 5'-hydroxyl groups of both single-stranded RNA (ssRNA) and single-stranded DNA (ssDNA). Exhibits a strong preference for ssRNA.</text>
</comment>
<comment type="catalytic activity">
    <reaction evidence="1">
        <text>a 5'-end dephospho-2'-deoxyribonucleoside-DNA + ATP = a 5'-end 5'-phospho-2'-deoxyribonucleoside-DNA + ADP + H(+)</text>
        <dbReference type="Rhea" id="RHEA:15669"/>
        <dbReference type="Rhea" id="RHEA-COMP:13180"/>
        <dbReference type="Rhea" id="RHEA-COMP:13184"/>
        <dbReference type="ChEBI" id="CHEBI:15378"/>
        <dbReference type="ChEBI" id="CHEBI:30616"/>
        <dbReference type="ChEBI" id="CHEBI:136412"/>
        <dbReference type="ChEBI" id="CHEBI:136416"/>
        <dbReference type="ChEBI" id="CHEBI:456216"/>
        <dbReference type="EC" id="2.7.1.78"/>
    </reaction>
</comment>
<comment type="catalytic activity">
    <reaction evidence="1">
        <text>a 5'-end dephospho-ribonucleoside-RNA + ATP = a 5'-end 5'-phospho-ribonucleoside-RNA + ADP + H(+)</text>
        <dbReference type="Rhea" id="RHEA:54580"/>
        <dbReference type="Rhea" id="RHEA-COMP:13936"/>
        <dbReference type="Rhea" id="RHEA-COMP:15179"/>
        <dbReference type="ChEBI" id="CHEBI:15378"/>
        <dbReference type="ChEBI" id="CHEBI:30616"/>
        <dbReference type="ChEBI" id="CHEBI:138282"/>
        <dbReference type="ChEBI" id="CHEBI:138284"/>
        <dbReference type="ChEBI" id="CHEBI:456216"/>
        <dbReference type="EC" id="2.7.1.78"/>
    </reaction>
</comment>
<comment type="cofactor">
    <cofactor evidence="1">
        <name>a divalent metal cation</name>
        <dbReference type="ChEBI" id="CHEBI:60240"/>
    </cofactor>
</comment>
<comment type="activity regulation">
    <text evidence="1">DNA kinase activity is inhibited by 250 mM sodium chloride whereas RNA kinase activity is unaffected.</text>
</comment>
<comment type="biophysicochemical properties">
    <kinetics>
        <KM evidence="1">16 uM for ATP using 24-mer 5'-OH DNA as substrate</KM>
    </kinetics>
    <phDependence>
        <text evidence="1">Optimum pH is 4.5 to 9.5 using 24-mer 5'-OH DNA as substrate and 4.5 to 6.5 using 24-mer 5'-OH RNA as substrate.</text>
    </phDependence>
    <temperatureDependence>
        <text evidence="1">Optimum temperature is 55 to 75 degrees Celsius using 24-mer 5'-OH DNA as substrate and from 55 to 85 degrees Celsius using 24-mer 5'-OH RNA as substrate.</text>
    </temperatureDependence>
</comment>
<gene>
    <name type="ordered locus">PH0197</name>
</gene>
<evidence type="ECO:0000269" key="1">
    <source>
    </source>
</evidence>
<evidence type="ECO:0000305" key="2"/>
<reference key="1">
    <citation type="journal article" date="1998" name="DNA Res.">
        <title>Complete sequence and gene organization of the genome of a hyper-thermophilic archaebacterium, Pyrococcus horikoshii OT3.</title>
        <authorList>
            <person name="Kawarabayasi Y."/>
            <person name="Sawada M."/>
            <person name="Horikawa H."/>
            <person name="Haikawa Y."/>
            <person name="Hino Y."/>
            <person name="Yamamoto S."/>
            <person name="Sekine M."/>
            <person name="Baba S."/>
            <person name="Kosugi H."/>
            <person name="Hosoyama A."/>
            <person name="Nagai Y."/>
            <person name="Sakai M."/>
            <person name="Ogura K."/>
            <person name="Otsuka R."/>
            <person name="Nakazawa H."/>
            <person name="Takamiya M."/>
            <person name="Ohfuku Y."/>
            <person name="Funahashi T."/>
            <person name="Tanaka T."/>
            <person name="Kudoh Y."/>
            <person name="Yamazaki J."/>
            <person name="Kushida N."/>
            <person name="Oguchi A."/>
            <person name="Aoki K."/>
            <person name="Yoshizawa T."/>
            <person name="Nakamura Y."/>
            <person name="Robb F.T."/>
            <person name="Horikoshi K."/>
            <person name="Masuchi Y."/>
            <person name="Shizuya H."/>
            <person name="Kikuchi H."/>
        </authorList>
    </citation>
    <scope>NUCLEOTIDE SEQUENCE [LARGE SCALE GENOMIC DNA]</scope>
    <source>
        <strain>ATCC 700860 / DSM 12428 / JCM 9974 / NBRC 100139 / OT-3</strain>
    </source>
</reference>
<reference key="2">
    <citation type="journal article" date="2009" name="RNA">
        <title>Characterization of a thermostable archaeal polynucleotide kinase homologous to human Clp1.</title>
        <authorList>
            <person name="Jain R."/>
            <person name="Shuman S."/>
        </authorList>
    </citation>
    <scope>FUNCTION</scope>
    <scope>CATALYTIC ACTIVITY</scope>
    <scope>COFACTOR</scope>
    <scope>ACTIVITY REGULATION</scope>
    <scope>BIOPHYSICOCHEMICAL PROPERTIES</scope>
    <scope>MUTAGENESIS OF LYS-49 AND ASP-73</scope>
</reference>
<organism>
    <name type="scientific">Pyrococcus horikoshii (strain ATCC 700860 / DSM 12428 / JCM 9974 / NBRC 100139 / OT-3)</name>
    <dbReference type="NCBI Taxonomy" id="70601"/>
    <lineage>
        <taxon>Archaea</taxon>
        <taxon>Methanobacteriati</taxon>
        <taxon>Methanobacteriota</taxon>
        <taxon>Thermococci</taxon>
        <taxon>Thermococcales</taxon>
        <taxon>Thermococcaceae</taxon>
        <taxon>Pyrococcus</taxon>
    </lineage>
</organism>
<feature type="chain" id="PRO_0000376017" description="Polyribonucleotide 5'-hydroxyl-kinase PH0197">
    <location>
        <begin position="1"/>
        <end position="361"/>
    </location>
</feature>
<feature type="binding site" evidence="2">
    <location>
        <begin position="43"/>
        <end position="50"/>
    </location>
    <ligand>
        <name>ATP</name>
        <dbReference type="ChEBI" id="CHEBI:30616"/>
    </ligand>
</feature>
<feature type="mutagenesis site" description="100-fold decrease in kinase activity against both DNA and RNA." evidence="1">
    <original>K</original>
    <variation>A</variation>
    <location>
        <position position="49"/>
    </location>
</feature>
<feature type="mutagenesis site" description="Abrogates kinase activity against both DNA and RNA." evidence="1">
    <original>D</original>
    <variation>A</variation>
    <location>
        <position position="73"/>
    </location>
</feature>